<protein>
    <recommendedName>
        <fullName evidence="1">Light-independent protochlorophyllide reductase subunit B</fullName>
        <shortName evidence="1">DPOR subunit B</shortName>
        <shortName evidence="1">LI-POR subunit B</shortName>
        <ecNumber evidence="1">1.3.7.7</ecNumber>
    </recommendedName>
</protein>
<feature type="chain" id="PRO_0000219821" description="Light-independent protochlorophyllide reductase subunit B">
    <location>
        <begin position="1"/>
        <end position="509"/>
    </location>
</feature>
<feature type="active site" description="Proton donor" evidence="1">
    <location>
        <position position="298"/>
    </location>
</feature>
<feature type="binding site" evidence="1">
    <location>
        <position position="36"/>
    </location>
    <ligand>
        <name>[4Fe-4S] cluster</name>
        <dbReference type="ChEBI" id="CHEBI:49883"/>
        <note>ligand shared with heterodimeric partner</note>
    </ligand>
</feature>
<feature type="binding site" evidence="1">
    <location>
        <begin position="433"/>
        <end position="434"/>
    </location>
    <ligand>
        <name>substrate</name>
    </ligand>
</feature>
<evidence type="ECO:0000255" key="1">
    <source>
        <dbReference type="HAMAP-Rule" id="MF_00353"/>
    </source>
</evidence>
<proteinExistence type="inferred from homology"/>
<dbReference type="EC" id="1.3.7.7" evidence="1"/>
<dbReference type="EMBL" id="U21315">
    <property type="protein sequence ID" value="AAC49429.1"/>
    <property type="molecule type" value="Genomic_DNA"/>
</dbReference>
<dbReference type="EMBL" id="L25765">
    <property type="protein sequence ID" value="AAC37487.1"/>
    <property type="molecule type" value="Genomic_DNA"/>
</dbReference>
<dbReference type="SMR" id="P37846"/>
<dbReference type="UniPathway" id="UPA00670"/>
<dbReference type="GO" id="GO:0009507">
    <property type="term" value="C:chloroplast"/>
    <property type="evidence" value="ECO:0007669"/>
    <property type="project" value="UniProtKB-SubCell"/>
</dbReference>
<dbReference type="GO" id="GO:0051539">
    <property type="term" value="F:4 iron, 4 sulfur cluster binding"/>
    <property type="evidence" value="ECO:0007669"/>
    <property type="project" value="UniProtKB-UniRule"/>
</dbReference>
<dbReference type="GO" id="GO:0005524">
    <property type="term" value="F:ATP binding"/>
    <property type="evidence" value="ECO:0007669"/>
    <property type="project" value="UniProtKB-UniRule"/>
</dbReference>
<dbReference type="GO" id="GO:0046872">
    <property type="term" value="F:metal ion binding"/>
    <property type="evidence" value="ECO:0007669"/>
    <property type="project" value="UniProtKB-KW"/>
</dbReference>
<dbReference type="GO" id="GO:0016730">
    <property type="term" value="F:oxidoreductase activity, acting on iron-sulfur proteins as donors"/>
    <property type="evidence" value="ECO:0007669"/>
    <property type="project" value="InterPro"/>
</dbReference>
<dbReference type="GO" id="GO:0016636">
    <property type="term" value="F:oxidoreductase activity, acting on the CH-CH group of donors, iron-sulfur protein as acceptor"/>
    <property type="evidence" value="ECO:0007669"/>
    <property type="project" value="UniProtKB-UniRule"/>
</dbReference>
<dbReference type="GO" id="GO:0036068">
    <property type="term" value="P:light-independent chlorophyll biosynthetic process"/>
    <property type="evidence" value="ECO:0007669"/>
    <property type="project" value="UniProtKB-UniRule"/>
</dbReference>
<dbReference type="GO" id="GO:0019685">
    <property type="term" value="P:photosynthesis, dark reaction"/>
    <property type="evidence" value="ECO:0007669"/>
    <property type="project" value="InterPro"/>
</dbReference>
<dbReference type="CDD" id="cd01981">
    <property type="entry name" value="Pchlide_reductase_B"/>
    <property type="match status" value="1"/>
</dbReference>
<dbReference type="Gene3D" id="1.20.89.20">
    <property type="match status" value="1"/>
</dbReference>
<dbReference type="Gene3D" id="3.40.50.1980">
    <property type="entry name" value="Nitrogenase molybdenum iron protein domain"/>
    <property type="match status" value="3"/>
</dbReference>
<dbReference type="Gene3D" id="1.10.8.550">
    <property type="entry name" value="Proto-chlorophyllide reductase 57 kD subunit B"/>
    <property type="match status" value="1"/>
</dbReference>
<dbReference type="HAMAP" id="MF_00353">
    <property type="entry name" value="ChlB_BchB"/>
    <property type="match status" value="1"/>
</dbReference>
<dbReference type="InterPro" id="IPR050152">
    <property type="entry name" value="ChlB/BchB/BchZ"/>
</dbReference>
<dbReference type="InterPro" id="IPR013580">
    <property type="entry name" value="LI-POR_suB-like_C"/>
</dbReference>
<dbReference type="InterPro" id="IPR000510">
    <property type="entry name" value="Nase/OxRdtase_comp1"/>
</dbReference>
<dbReference type="InterPro" id="IPR042298">
    <property type="entry name" value="P-CP_red_C"/>
</dbReference>
<dbReference type="InterPro" id="IPR005969">
    <property type="entry name" value="Protochl_reductB"/>
</dbReference>
<dbReference type="InterPro" id="IPR016209">
    <property type="entry name" value="Protochlorophyllide_Rdtase"/>
</dbReference>
<dbReference type="NCBIfam" id="TIGR01278">
    <property type="entry name" value="DPOR_BchB"/>
    <property type="match status" value="1"/>
</dbReference>
<dbReference type="PANTHER" id="PTHR33712">
    <property type="entry name" value="LIGHT-INDEPENDENT PROTOCHLOROPHYLLIDE REDUCTASE SUBUNIT B"/>
    <property type="match status" value="1"/>
</dbReference>
<dbReference type="PANTHER" id="PTHR33712:SF7">
    <property type="entry name" value="LIGHT-INDEPENDENT PROTOCHLOROPHYLLIDE REDUCTASE SUBUNIT B"/>
    <property type="match status" value="1"/>
</dbReference>
<dbReference type="Pfam" id="PF00148">
    <property type="entry name" value="Oxidored_nitro"/>
    <property type="match status" value="1"/>
</dbReference>
<dbReference type="Pfam" id="PF08369">
    <property type="entry name" value="PCP_red"/>
    <property type="match status" value="1"/>
</dbReference>
<dbReference type="PIRSF" id="PIRSF000163">
    <property type="entry name" value="PCP_ChlB"/>
    <property type="match status" value="1"/>
</dbReference>
<dbReference type="SUPFAM" id="SSF53807">
    <property type="entry name" value="Helical backbone' metal receptor"/>
    <property type="match status" value="1"/>
</dbReference>
<accession>P37846</accession>
<name>CHLB_EPHAL</name>
<sequence>MKLAYWMYAGPAHIGTLRVANSFKNVHAIMHAPLGDDYFNVMRSMLERERNFTPATASIVDRRVLGRGSQKKVVDNLLRKDKEENPDLIILTPTCTSSILQEDLQNFVDRASVISDSNIILADVDHYQVNEIQAADRTLEQVVRFYLSKQKKEKLDRFLTDVPSVNIIGIFTLGFHHQHDCRELKRLFQDLNIQINQVIPEGGSVEDLQNLPKAWLNLVPYREIGLMTAFFLKKEFGMPYLSITPMGVIDNAECIRRIEKSVNPFASIFGEKGVNYESYIDRQTRFISQAVWFSRSIDCQNFTGKQTVVFGDATHAASITKILAREMGIRVSCTGTYCKHDAEWFKEQVQDFSNEILITEDHAKVGKKIACVEPSAIFGTQMERHIGKRFDISCGVISAPVHIQNFPLGYRPFMGYEGTNQIADLVYNSFALGMEDHLLDIFGGHDMKEVITKSNPIGGLDVIWDTESQLELPQIPRFVRDKVKRETEKFAKIKGVVKITIEVMYAAKE</sequence>
<geneLocation type="chloroplast"/>
<organism>
    <name type="scientific">Ephedra altissima</name>
    <name type="common">High-climbing jointfir</name>
    <dbReference type="NCBI Taxonomy" id="3391"/>
    <lineage>
        <taxon>Eukaryota</taxon>
        <taxon>Viridiplantae</taxon>
        <taxon>Streptophyta</taxon>
        <taxon>Embryophyta</taxon>
        <taxon>Tracheophyta</taxon>
        <taxon>Spermatophyta</taxon>
        <taxon>Gnetopsida</taxon>
        <taxon>Gnetidae</taxon>
        <taxon>Ephedrales</taxon>
        <taxon>Ephedraceae</taxon>
        <taxon>Ephedra</taxon>
    </lineage>
</organism>
<comment type="function">
    <text evidence="1">Component of the dark-operative protochlorophyllide reductase (DPOR) that uses Mg-ATP and reduced ferredoxin to reduce ring D of protochlorophyllide (Pchlide) to form chlorophyllide a (Chlide). This reaction is light-independent. The NB-protein (ChlN-ChlB) is the catalytic component of the complex.</text>
</comment>
<comment type="catalytic activity">
    <reaction evidence="1">
        <text>chlorophyllide a + oxidized 2[4Fe-4S]-[ferredoxin] + 2 ADP + 2 phosphate = protochlorophyllide a + reduced 2[4Fe-4S]-[ferredoxin] + 2 ATP + 2 H2O</text>
        <dbReference type="Rhea" id="RHEA:28202"/>
        <dbReference type="Rhea" id="RHEA-COMP:10002"/>
        <dbReference type="Rhea" id="RHEA-COMP:10004"/>
        <dbReference type="ChEBI" id="CHEBI:15377"/>
        <dbReference type="ChEBI" id="CHEBI:30616"/>
        <dbReference type="ChEBI" id="CHEBI:33722"/>
        <dbReference type="ChEBI" id="CHEBI:33723"/>
        <dbReference type="ChEBI" id="CHEBI:43474"/>
        <dbReference type="ChEBI" id="CHEBI:83348"/>
        <dbReference type="ChEBI" id="CHEBI:83350"/>
        <dbReference type="ChEBI" id="CHEBI:456216"/>
        <dbReference type="EC" id="1.3.7.7"/>
    </reaction>
</comment>
<comment type="cofactor">
    <cofactor evidence="1">
        <name>[4Fe-4S] cluster</name>
        <dbReference type="ChEBI" id="CHEBI:49883"/>
    </cofactor>
    <text evidence="1">Binds 1 [4Fe-4S] cluster per heterodimer. The cluster is bound at the heterodimer interface by residues from both subunits.</text>
</comment>
<comment type="pathway">
    <text evidence="1">Porphyrin-containing compound metabolism; chlorophyll biosynthesis (light-independent).</text>
</comment>
<comment type="subunit">
    <text evidence="1">Protochlorophyllide reductase is composed of three subunits; ChlL, ChlN and ChlB. Forms a heterotetramer of two ChlB and two ChlN subunits.</text>
</comment>
<comment type="subcellular location">
    <subcellularLocation>
        <location>Plastid</location>
        <location>Chloroplast</location>
    </subcellularLocation>
</comment>
<comment type="similarity">
    <text evidence="1">Belongs to the ChlB/BchB/BchZ family.</text>
</comment>
<reference key="1">
    <citation type="journal article" date="1996" name="Mol. Phylogenet. Evol.">
        <title>Phylogenetic inferences from chloroplast chlB gene sequences of Nephrolepis exaltata (Filicopsida), Ephedra altissima (Gnetopsida), and diverse land plants.</title>
        <authorList>
            <person name="Boivin R."/>
            <person name="Richard M."/>
            <person name="Beauseigle D."/>
            <person name="Bousquet J."/>
            <person name="Bellemare G."/>
        </authorList>
    </citation>
    <scope>NUCLEOTIDE SEQUENCE [GENOMIC DNA]</scope>
</reference>
<gene>
    <name evidence="1" type="primary">chlB</name>
</gene>
<keyword id="KW-0004">4Fe-4S</keyword>
<keyword id="KW-0067">ATP-binding</keyword>
<keyword id="KW-0149">Chlorophyll biosynthesis</keyword>
<keyword id="KW-0150">Chloroplast</keyword>
<keyword id="KW-0408">Iron</keyword>
<keyword id="KW-0411">Iron-sulfur</keyword>
<keyword id="KW-0479">Metal-binding</keyword>
<keyword id="KW-0547">Nucleotide-binding</keyword>
<keyword id="KW-0560">Oxidoreductase</keyword>
<keyword id="KW-0602">Photosynthesis</keyword>
<keyword id="KW-0934">Plastid</keyword>